<comment type="function">
    <text evidence="1">ATP-dependent specificity component of the Clp protease. It directs the protease to specific substrates. Can perform chaperone functions in the absence of ClpP.</text>
</comment>
<comment type="subunit">
    <text evidence="1">Component of the ClpX-ClpP complex. Forms a hexameric ring that, in the presence of ATP, binds to fourteen ClpP subunits assembled into a disk-like structure with a central cavity, resembling the structure of eukaryotic proteasomes.</text>
</comment>
<comment type="similarity">
    <text evidence="1">Belongs to the ClpX chaperone family.</text>
</comment>
<sequence>MTDKRKDGSGKLLYCSFCGKSQHEVRKLIAGPSVYICDECVDLCNDIIREEIKEVAPHRERSALPTPHEIRHHLDDYVIGQEQAKKVLAVAVYNHYKRLRNGDTSNGVELGKSNILLIGPTGSGKTLLAETLARLLDVPFTMADATTLTEAGYVGEDVENIIQKLLQKCDYDVQKAQRGIVYIDEIDKISRKSDNPSITRDVSGEGVQQALLKLIEGTVAAVPPQGGRKHPQQEFLQVDTSKILFICGGAFAGLDKVISHRVETGSGIGFGATVKAKSDKASEGELLAQVEPEDLIKFGLIPEFIGRLPVVATLNELSEEALIQILKEPKNALTKQYQALFSLEGAELEFRDEALDAIAKKAMARKTGARGLRSIVEAALLDTMYDLPSMEDVEKVVIDESVIAGQSKPLLIYGKPEAQQASGE</sequence>
<protein>
    <recommendedName>
        <fullName evidence="1">ATP-dependent Clp protease ATP-binding subunit ClpX</fullName>
    </recommendedName>
</protein>
<reference key="1">
    <citation type="submission" date="2006-09" db="EMBL/GenBank/DDBJ databases">
        <authorList>
            <consortium name="The Klebsiella pneumonia Genome Sequencing Project"/>
            <person name="McClelland M."/>
            <person name="Sanderson E.K."/>
            <person name="Spieth J."/>
            <person name="Clifton W.S."/>
            <person name="Latreille P."/>
            <person name="Sabo A."/>
            <person name="Pepin K."/>
            <person name="Bhonagiri V."/>
            <person name="Porwollik S."/>
            <person name="Ali J."/>
            <person name="Wilson R.K."/>
        </authorList>
    </citation>
    <scope>NUCLEOTIDE SEQUENCE [LARGE SCALE GENOMIC DNA]</scope>
    <source>
        <strain>ATCC 700721 / MGH 78578</strain>
    </source>
</reference>
<evidence type="ECO:0000255" key="1">
    <source>
        <dbReference type="HAMAP-Rule" id="MF_00175"/>
    </source>
</evidence>
<evidence type="ECO:0000255" key="2">
    <source>
        <dbReference type="PROSITE-ProRule" id="PRU01250"/>
    </source>
</evidence>
<feature type="chain" id="PRO_1000024569" description="ATP-dependent Clp protease ATP-binding subunit ClpX">
    <location>
        <begin position="1"/>
        <end position="424"/>
    </location>
</feature>
<feature type="domain" description="ClpX-type ZB" evidence="2">
    <location>
        <begin position="2"/>
        <end position="56"/>
    </location>
</feature>
<feature type="binding site" evidence="2">
    <location>
        <position position="15"/>
    </location>
    <ligand>
        <name>Zn(2+)</name>
        <dbReference type="ChEBI" id="CHEBI:29105"/>
    </ligand>
</feature>
<feature type="binding site" evidence="2">
    <location>
        <position position="18"/>
    </location>
    <ligand>
        <name>Zn(2+)</name>
        <dbReference type="ChEBI" id="CHEBI:29105"/>
    </ligand>
</feature>
<feature type="binding site" evidence="2">
    <location>
        <position position="37"/>
    </location>
    <ligand>
        <name>Zn(2+)</name>
        <dbReference type="ChEBI" id="CHEBI:29105"/>
    </ligand>
</feature>
<feature type="binding site" evidence="2">
    <location>
        <position position="40"/>
    </location>
    <ligand>
        <name>Zn(2+)</name>
        <dbReference type="ChEBI" id="CHEBI:29105"/>
    </ligand>
</feature>
<feature type="binding site" evidence="1">
    <location>
        <begin position="120"/>
        <end position="127"/>
    </location>
    <ligand>
        <name>ATP</name>
        <dbReference type="ChEBI" id="CHEBI:30616"/>
    </ligand>
</feature>
<accession>A6T5I1</accession>
<name>CLPX_KLEP7</name>
<dbReference type="EMBL" id="CP000647">
    <property type="protein sequence ID" value="ABR75852.1"/>
    <property type="molecule type" value="Genomic_DNA"/>
</dbReference>
<dbReference type="RefSeq" id="WP_002891807.1">
    <property type="nucleotide sequence ID" value="NC_009648.1"/>
</dbReference>
<dbReference type="BMRB" id="A6T5I1"/>
<dbReference type="SMR" id="A6T5I1"/>
<dbReference type="STRING" id="272620.KPN_00400"/>
<dbReference type="jPOST" id="A6T5I1"/>
<dbReference type="PaxDb" id="272620-KPN_00400"/>
<dbReference type="EnsemblBacteria" id="ABR75852">
    <property type="protein sequence ID" value="ABR75852"/>
    <property type="gene ID" value="KPN_00400"/>
</dbReference>
<dbReference type="GeneID" id="93252605"/>
<dbReference type="KEGG" id="kpn:KPN_00400"/>
<dbReference type="HOGENOM" id="CLU_014218_8_2_6"/>
<dbReference type="Proteomes" id="UP000000265">
    <property type="component" value="Chromosome"/>
</dbReference>
<dbReference type="GO" id="GO:0009376">
    <property type="term" value="C:HslUV protease complex"/>
    <property type="evidence" value="ECO:0007669"/>
    <property type="project" value="TreeGrafter"/>
</dbReference>
<dbReference type="GO" id="GO:0005524">
    <property type="term" value="F:ATP binding"/>
    <property type="evidence" value="ECO:0007669"/>
    <property type="project" value="UniProtKB-UniRule"/>
</dbReference>
<dbReference type="GO" id="GO:0016887">
    <property type="term" value="F:ATP hydrolysis activity"/>
    <property type="evidence" value="ECO:0007669"/>
    <property type="project" value="InterPro"/>
</dbReference>
<dbReference type="GO" id="GO:0140662">
    <property type="term" value="F:ATP-dependent protein folding chaperone"/>
    <property type="evidence" value="ECO:0007669"/>
    <property type="project" value="InterPro"/>
</dbReference>
<dbReference type="GO" id="GO:0046983">
    <property type="term" value="F:protein dimerization activity"/>
    <property type="evidence" value="ECO:0007669"/>
    <property type="project" value="InterPro"/>
</dbReference>
<dbReference type="GO" id="GO:0051082">
    <property type="term" value="F:unfolded protein binding"/>
    <property type="evidence" value="ECO:0007669"/>
    <property type="project" value="UniProtKB-UniRule"/>
</dbReference>
<dbReference type="GO" id="GO:0008270">
    <property type="term" value="F:zinc ion binding"/>
    <property type="evidence" value="ECO:0007669"/>
    <property type="project" value="InterPro"/>
</dbReference>
<dbReference type="GO" id="GO:0051301">
    <property type="term" value="P:cell division"/>
    <property type="evidence" value="ECO:0007669"/>
    <property type="project" value="TreeGrafter"/>
</dbReference>
<dbReference type="GO" id="GO:0051603">
    <property type="term" value="P:proteolysis involved in protein catabolic process"/>
    <property type="evidence" value="ECO:0007669"/>
    <property type="project" value="TreeGrafter"/>
</dbReference>
<dbReference type="CDD" id="cd19497">
    <property type="entry name" value="RecA-like_ClpX"/>
    <property type="match status" value="1"/>
</dbReference>
<dbReference type="FunFam" id="1.10.8.60:FF:000002">
    <property type="entry name" value="ATP-dependent Clp protease ATP-binding subunit ClpX"/>
    <property type="match status" value="1"/>
</dbReference>
<dbReference type="FunFam" id="3.40.50.300:FF:000005">
    <property type="entry name" value="ATP-dependent Clp protease ATP-binding subunit ClpX"/>
    <property type="match status" value="1"/>
</dbReference>
<dbReference type="Gene3D" id="1.10.8.60">
    <property type="match status" value="1"/>
</dbReference>
<dbReference type="Gene3D" id="6.20.220.10">
    <property type="entry name" value="ClpX chaperone, C4-type zinc finger domain"/>
    <property type="match status" value="1"/>
</dbReference>
<dbReference type="Gene3D" id="3.40.50.300">
    <property type="entry name" value="P-loop containing nucleotide triphosphate hydrolases"/>
    <property type="match status" value="1"/>
</dbReference>
<dbReference type="HAMAP" id="MF_00175">
    <property type="entry name" value="ClpX"/>
    <property type="match status" value="1"/>
</dbReference>
<dbReference type="InterPro" id="IPR003593">
    <property type="entry name" value="AAA+_ATPase"/>
</dbReference>
<dbReference type="InterPro" id="IPR050052">
    <property type="entry name" value="ATP-dep_Clp_protease_ClpX"/>
</dbReference>
<dbReference type="InterPro" id="IPR003959">
    <property type="entry name" value="ATPase_AAA_core"/>
</dbReference>
<dbReference type="InterPro" id="IPR019489">
    <property type="entry name" value="Clp_ATPase_C"/>
</dbReference>
<dbReference type="InterPro" id="IPR004487">
    <property type="entry name" value="Clp_protease_ATP-bd_su_ClpX"/>
</dbReference>
<dbReference type="InterPro" id="IPR046425">
    <property type="entry name" value="ClpX_bact"/>
</dbReference>
<dbReference type="InterPro" id="IPR027417">
    <property type="entry name" value="P-loop_NTPase"/>
</dbReference>
<dbReference type="InterPro" id="IPR010603">
    <property type="entry name" value="Znf_CppX_C4"/>
</dbReference>
<dbReference type="InterPro" id="IPR038366">
    <property type="entry name" value="Znf_CppX_C4_sf"/>
</dbReference>
<dbReference type="NCBIfam" id="TIGR00382">
    <property type="entry name" value="clpX"/>
    <property type="match status" value="1"/>
</dbReference>
<dbReference type="NCBIfam" id="NF003745">
    <property type="entry name" value="PRK05342.1"/>
    <property type="match status" value="1"/>
</dbReference>
<dbReference type="PANTHER" id="PTHR48102:SF7">
    <property type="entry name" value="ATP-DEPENDENT CLP PROTEASE ATP-BINDING SUBUNIT CLPX-LIKE, MITOCHONDRIAL"/>
    <property type="match status" value="1"/>
</dbReference>
<dbReference type="PANTHER" id="PTHR48102">
    <property type="entry name" value="ATP-DEPENDENT CLP PROTEASE ATP-BINDING SUBUNIT CLPX-LIKE, MITOCHONDRIAL-RELATED"/>
    <property type="match status" value="1"/>
</dbReference>
<dbReference type="Pfam" id="PF07724">
    <property type="entry name" value="AAA_2"/>
    <property type="match status" value="1"/>
</dbReference>
<dbReference type="Pfam" id="PF10431">
    <property type="entry name" value="ClpB_D2-small"/>
    <property type="match status" value="1"/>
</dbReference>
<dbReference type="Pfam" id="PF06689">
    <property type="entry name" value="zf-C4_ClpX"/>
    <property type="match status" value="1"/>
</dbReference>
<dbReference type="SMART" id="SM00382">
    <property type="entry name" value="AAA"/>
    <property type="match status" value="1"/>
</dbReference>
<dbReference type="SMART" id="SM01086">
    <property type="entry name" value="ClpB_D2-small"/>
    <property type="match status" value="1"/>
</dbReference>
<dbReference type="SMART" id="SM00994">
    <property type="entry name" value="zf-C4_ClpX"/>
    <property type="match status" value="1"/>
</dbReference>
<dbReference type="SUPFAM" id="SSF57716">
    <property type="entry name" value="Glucocorticoid receptor-like (DNA-binding domain)"/>
    <property type="match status" value="1"/>
</dbReference>
<dbReference type="SUPFAM" id="SSF52540">
    <property type="entry name" value="P-loop containing nucleoside triphosphate hydrolases"/>
    <property type="match status" value="1"/>
</dbReference>
<dbReference type="PROSITE" id="PS51902">
    <property type="entry name" value="CLPX_ZB"/>
    <property type="match status" value="1"/>
</dbReference>
<keyword id="KW-0067">ATP-binding</keyword>
<keyword id="KW-0143">Chaperone</keyword>
<keyword id="KW-0479">Metal-binding</keyword>
<keyword id="KW-0547">Nucleotide-binding</keyword>
<keyword id="KW-0862">Zinc</keyword>
<organism>
    <name type="scientific">Klebsiella pneumoniae subsp. pneumoniae (strain ATCC 700721 / MGH 78578)</name>
    <dbReference type="NCBI Taxonomy" id="272620"/>
    <lineage>
        <taxon>Bacteria</taxon>
        <taxon>Pseudomonadati</taxon>
        <taxon>Pseudomonadota</taxon>
        <taxon>Gammaproteobacteria</taxon>
        <taxon>Enterobacterales</taxon>
        <taxon>Enterobacteriaceae</taxon>
        <taxon>Klebsiella/Raoultella group</taxon>
        <taxon>Klebsiella</taxon>
        <taxon>Klebsiella pneumoniae complex</taxon>
    </lineage>
</organism>
<proteinExistence type="inferred from homology"/>
<gene>
    <name evidence="1" type="primary">clpX</name>
    <name type="ordered locus">KPN78578_03910</name>
    <name type="ORF">KPN_00400</name>
</gene>